<dbReference type="EMBL" id="AL123456">
    <property type="protein sequence ID" value="CCP44678.1"/>
    <property type="molecule type" value="Genomic_DNA"/>
</dbReference>
<dbReference type="PIR" id="D70519">
    <property type="entry name" value="D70519"/>
</dbReference>
<dbReference type="RefSeq" id="NP_216427.1">
    <property type="nucleotide sequence ID" value="NC_000962.3"/>
</dbReference>
<dbReference type="RefSeq" id="WP_003409568.1">
    <property type="nucleotide sequence ID" value="NZ_NVQJ01000034.1"/>
</dbReference>
<dbReference type="SMR" id="P9WFN3"/>
<dbReference type="STRING" id="83332.Rv1911c"/>
<dbReference type="PaxDb" id="83332-Rv1911c"/>
<dbReference type="DNASU" id="885646"/>
<dbReference type="GeneID" id="885646"/>
<dbReference type="KEGG" id="mtu:Rv1911c"/>
<dbReference type="KEGG" id="mtv:RVBD_1911c"/>
<dbReference type="PATRIC" id="fig|83332.111.peg.2126"/>
<dbReference type="TubercuList" id="Rv1911c"/>
<dbReference type="eggNOG" id="COG1881">
    <property type="taxonomic scope" value="Bacteria"/>
</dbReference>
<dbReference type="InParanoid" id="P9WFN3"/>
<dbReference type="OrthoDB" id="9797506at2"/>
<dbReference type="PhylomeDB" id="P9WFN3"/>
<dbReference type="Proteomes" id="UP000001584">
    <property type="component" value="Chromosome"/>
</dbReference>
<dbReference type="GO" id="GO:0009986">
    <property type="term" value="C:cell surface"/>
    <property type="evidence" value="ECO:0007669"/>
    <property type="project" value="UniProtKB-SubCell"/>
</dbReference>
<dbReference type="GO" id="GO:0005576">
    <property type="term" value="C:extracellular region"/>
    <property type="evidence" value="ECO:0007005"/>
    <property type="project" value="MTBBASE"/>
</dbReference>
<dbReference type="GO" id="GO:0009274">
    <property type="term" value="C:peptidoglycan-based cell wall"/>
    <property type="evidence" value="ECO:0007005"/>
    <property type="project" value="MTBBASE"/>
</dbReference>
<dbReference type="GO" id="GO:0005886">
    <property type="term" value="C:plasma membrane"/>
    <property type="evidence" value="ECO:0007669"/>
    <property type="project" value="UniProtKB-SubCell"/>
</dbReference>
<dbReference type="CDD" id="cd00865">
    <property type="entry name" value="PEBP_bact_arch"/>
    <property type="match status" value="1"/>
</dbReference>
<dbReference type="FunFam" id="3.90.280.10:FF:000008">
    <property type="entry name" value="Probable lipoprotein lppC"/>
    <property type="match status" value="1"/>
</dbReference>
<dbReference type="Gene3D" id="3.90.280.10">
    <property type="entry name" value="PEBP-like"/>
    <property type="match status" value="1"/>
</dbReference>
<dbReference type="InterPro" id="IPR008914">
    <property type="entry name" value="PEBP"/>
</dbReference>
<dbReference type="InterPro" id="IPR036610">
    <property type="entry name" value="PEBP-like_sf"/>
</dbReference>
<dbReference type="InterPro" id="IPR005247">
    <property type="entry name" value="YbhB_YbcL/LppC-like"/>
</dbReference>
<dbReference type="NCBIfam" id="TIGR00481">
    <property type="entry name" value="YbhB/YbcL family Raf kinase inhibitor-like protein"/>
    <property type="match status" value="1"/>
</dbReference>
<dbReference type="PANTHER" id="PTHR30289:SF1">
    <property type="entry name" value="PEBP (PHOSPHATIDYLETHANOLAMINE-BINDING PROTEIN) FAMILY PROTEIN"/>
    <property type="match status" value="1"/>
</dbReference>
<dbReference type="PANTHER" id="PTHR30289">
    <property type="entry name" value="UNCHARACTERIZED PROTEIN YBCL-RELATED"/>
    <property type="match status" value="1"/>
</dbReference>
<dbReference type="Pfam" id="PF01161">
    <property type="entry name" value="PBP"/>
    <property type="match status" value="1"/>
</dbReference>
<dbReference type="SUPFAM" id="SSF49777">
    <property type="entry name" value="PEBP-like"/>
    <property type="match status" value="1"/>
</dbReference>
<dbReference type="PROSITE" id="PS51257">
    <property type="entry name" value="PROKAR_LIPOPROTEIN"/>
    <property type="match status" value="1"/>
</dbReference>
<accession>P9WFN3</accession>
<accession>L0T886</accession>
<accession>O07722</accession>
<accession>P67224</accession>
<protein>
    <recommendedName>
        <fullName evidence="5">Putative lipoprotein LppC</fullName>
    </recommendedName>
    <alternativeName>
        <fullName>UPF0098 protein Rv1911c</fullName>
    </alternativeName>
</protein>
<proteinExistence type="evidence at protein level"/>
<sequence length="201" mass="19798">MTSTLHRTPLATAGLALVVALGGCGGGGGDSRETPPYVPKATTVDATTPAPAAEPLTIASPMFADGAPIPVQFSCKGANVAPPLTWSSPAGAAELALVVDDPDAVGGLYVHWIVTGIAPGSGSTADGQTPAGGHSVPNSGGRQGYFGPCPPAGTGTHHYRFTLYHLPVALQLPPGATGVQAAQAIAQAASGQARLVGTFEG</sequence>
<organism>
    <name type="scientific">Mycobacterium tuberculosis (strain ATCC 25618 / H37Rv)</name>
    <dbReference type="NCBI Taxonomy" id="83332"/>
    <lineage>
        <taxon>Bacteria</taxon>
        <taxon>Bacillati</taxon>
        <taxon>Actinomycetota</taxon>
        <taxon>Actinomycetes</taxon>
        <taxon>Mycobacteriales</taxon>
        <taxon>Mycobacteriaceae</taxon>
        <taxon>Mycobacterium</taxon>
        <taxon>Mycobacterium tuberculosis complex</taxon>
    </lineage>
</organism>
<keyword id="KW-1003">Cell membrane</keyword>
<keyword id="KW-0449">Lipoprotein</keyword>
<keyword id="KW-0472">Membrane</keyword>
<keyword id="KW-0564">Palmitate</keyword>
<keyword id="KW-1185">Reference proteome</keyword>
<keyword id="KW-0732">Signal</keyword>
<comment type="function">
    <text evidence="3">Probably involved in bacterial recognition and uptake by its host (human) (PubMed:25041568).</text>
</comment>
<comment type="subcellular location">
    <subcellularLocation>
        <location evidence="1">Cell membrane</location>
        <topology evidence="1">Lipid-anchor</topology>
    </subcellularLocation>
    <subcellularLocation>
        <location evidence="3">Cell surface</location>
    </subcellularLocation>
    <text evidence="3">Immunoelectron microscopy indicates this protein is displaced from the cell surface (PubMed:25041568).</text>
</comment>
<comment type="domain">
    <text evidence="3">Fragments of the mature protein (residues 77-96, 97-116 and 117-136) prevent uptake of M.tuberculosis by a human macrophage-like cell line (PubMed:25041568).</text>
</comment>
<comment type="similarity">
    <text evidence="4">Belongs to the UPF0098 family.</text>
</comment>
<evidence type="ECO:0000255" key="1">
    <source>
        <dbReference type="PROSITE-ProRule" id="PRU00303"/>
    </source>
</evidence>
<evidence type="ECO:0000256" key="2">
    <source>
        <dbReference type="SAM" id="MobiDB-lite"/>
    </source>
</evidence>
<evidence type="ECO:0000269" key="3">
    <source>
    </source>
</evidence>
<evidence type="ECO:0000305" key="4"/>
<evidence type="ECO:0000312" key="5">
    <source>
        <dbReference type="EMBL" id="CCP44678.1"/>
    </source>
</evidence>
<feature type="signal peptide" evidence="1">
    <location>
        <begin position="1"/>
        <end position="23"/>
    </location>
</feature>
<feature type="chain" id="PRO_0000137907" description="Putative lipoprotein LppC">
    <location>
        <begin position="24"/>
        <end position="201"/>
    </location>
</feature>
<feature type="region of interest" description="Prevents bacterial uptake by a human macrophage-like cell line" evidence="3">
    <location>
        <begin position="77"/>
        <end position="96"/>
    </location>
</feature>
<feature type="region of interest" description="Prevents bacterial uptake by a human macrophage-like cell line" evidence="3">
    <location>
        <begin position="97"/>
        <end position="116"/>
    </location>
</feature>
<feature type="region of interest" description="Prevents bacterial uptake by a human macrophage-like cell line" evidence="3">
    <location>
        <begin position="117"/>
        <end position="136"/>
    </location>
</feature>
<feature type="region of interest" description="Disordered" evidence="2">
    <location>
        <begin position="122"/>
        <end position="141"/>
    </location>
</feature>
<feature type="lipid moiety-binding region" description="N-palmitoyl cysteine" evidence="1">
    <location>
        <position position="24"/>
    </location>
</feature>
<feature type="lipid moiety-binding region" description="S-diacylglycerol cysteine" evidence="1">
    <location>
        <position position="24"/>
    </location>
</feature>
<reference key="1">
    <citation type="journal article" date="1998" name="Nature">
        <title>Deciphering the biology of Mycobacterium tuberculosis from the complete genome sequence.</title>
        <authorList>
            <person name="Cole S.T."/>
            <person name="Brosch R."/>
            <person name="Parkhill J."/>
            <person name="Garnier T."/>
            <person name="Churcher C.M."/>
            <person name="Harris D.E."/>
            <person name="Gordon S.V."/>
            <person name="Eiglmeier K."/>
            <person name="Gas S."/>
            <person name="Barry C.E. III"/>
            <person name="Tekaia F."/>
            <person name="Badcock K."/>
            <person name="Basham D."/>
            <person name="Brown D."/>
            <person name="Chillingworth T."/>
            <person name="Connor R."/>
            <person name="Davies R.M."/>
            <person name="Devlin K."/>
            <person name="Feltwell T."/>
            <person name="Gentles S."/>
            <person name="Hamlin N."/>
            <person name="Holroyd S."/>
            <person name="Hornsby T."/>
            <person name="Jagels K."/>
            <person name="Krogh A."/>
            <person name="McLean J."/>
            <person name="Moule S."/>
            <person name="Murphy L.D."/>
            <person name="Oliver S."/>
            <person name="Osborne J."/>
            <person name="Quail M.A."/>
            <person name="Rajandream M.A."/>
            <person name="Rogers J."/>
            <person name="Rutter S."/>
            <person name="Seeger K."/>
            <person name="Skelton S."/>
            <person name="Squares S."/>
            <person name="Squares R."/>
            <person name="Sulston J.E."/>
            <person name="Taylor K."/>
            <person name="Whitehead S."/>
            <person name="Barrell B.G."/>
        </authorList>
    </citation>
    <scope>NUCLEOTIDE SEQUENCE [LARGE SCALE GENOMIC DNA]</scope>
    <source>
        <strain>ATCC 25618 / H37Rv</strain>
    </source>
</reference>
<reference key="2">
    <citation type="journal article" date="2011" name="Mol. Cell. Proteomics">
        <title>Proteogenomic analysis of Mycobacterium tuberculosis by high resolution mass spectrometry.</title>
        <authorList>
            <person name="Kelkar D.S."/>
            <person name="Kumar D."/>
            <person name="Kumar P."/>
            <person name="Balakrishnan L."/>
            <person name="Muthusamy B."/>
            <person name="Yadav A.K."/>
            <person name="Shrivastava P."/>
            <person name="Marimuthu A."/>
            <person name="Anand S."/>
            <person name="Sundaram H."/>
            <person name="Kingsbury R."/>
            <person name="Harsha H.C."/>
            <person name="Nair B."/>
            <person name="Prasad T.S."/>
            <person name="Chauhan D.S."/>
            <person name="Katoch K."/>
            <person name="Katoch V.M."/>
            <person name="Kumar P."/>
            <person name="Chaerkady R."/>
            <person name="Ramachandran S."/>
            <person name="Dash D."/>
            <person name="Pandey A."/>
        </authorList>
    </citation>
    <scope>IDENTIFICATION BY MASS SPECTROMETRY [LARGE SCALE ANALYSIS]</scope>
    <source>
        <strain>ATCC 25618 / H37Rv</strain>
    </source>
</reference>
<reference key="3">
    <citation type="journal article" date="2014" name="Chem. Biol. Drug Des.">
        <title>Specific interaction between Mycobacterium tuberculosis lipoprotein-derived peptides and target cells inhibits mycobacterial entry in vitro.</title>
        <authorList>
            <person name="Ocampo M."/>
            <person name="Curtidor H."/>
            <person name="Vanegas M."/>
            <person name="Patarroyo M.A."/>
            <person name="Patarroyo M.E."/>
        </authorList>
    </citation>
    <scope>FUNCTION</scope>
    <scope>SUBCELLULAR LOCATION</scope>
    <scope>DOMAIN</scope>
</reference>
<gene>
    <name evidence="5" type="primary">lppC</name>
    <name type="ordered locus">Rv1911c</name>
    <name type="ORF">MTCY180.07</name>
</gene>
<name>LPPC_MYCTU</name>